<feature type="chain" id="PRO_0000349726" description="tRNA-specific 2-thiouridylase MnmA">
    <location>
        <begin position="1"/>
        <end position="369"/>
    </location>
</feature>
<feature type="region of interest" description="Interaction with tRNA" evidence="1">
    <location>
        <begin position="156"/>
        <end position="158"/>
    </location>
</feature>
<feature type="active site" description="Nucleophile" evidence="1">
    <location>
        <position position="110"/>
    </location>
</feature>
<feature type="active site" description="Cysteine persulfide intermediate" evidence="1">
    <location>
        <position position="206"/>
    </location>
</feature>
<feature type="binding site" evidence="1">
    <location>
        <begin position="16"/>
        <end position="23"/>
    </location>
    <ligand>
        <name>ATP</name>
        <dbReference type="ChEBI" id="CHEBI:30616"/>
    </ligand>
</feature>
<feature type="binding site" evidence="1">
    <location>
        <position position="42"/>
    </location>
    <ligand>
        <name>ATP</name>
        <dbReference type="ChEBI" id="CHEBI:30616"/>
    </ligand>
</feature>
<feature type="binding site" evidence="1">
    <location>
        <position position="134"/>
    </location>
    <ligand>
        <name>ATP</name>
        <dbReference type="ChEBI" id="CHEBI:30616"/>
    </ligand>
</feature>
<feature type="site" description="Interaction with tRNA" evidence="1">
    <location>
        <position position="135"/>
    </location>
</feature>
<feature type="site" description="Interaction with tRNA" evidence="1">
    <location>
        <position position="346"/>
    </location>
</feature>
<feature type="disulfide bond" description="Alternate" evidence="1">
    <location>
        <begin position="110"/>
        <end position="206"/>
    </location>
</feature>
<keyword id="KW-0067">ATP-binding</keyword>
<keyword id="KW-0963">Cytoplasm</keyword>
<keyword id="KW-1015">Disulfide bond</keyword>
<keyword id="KW-0547">Nucleotide-binding</keyword>
<keyword id="KW-1185">Reference proteome</keyword>
<keyword id="KW-0694">RNA-binding</keyword>
<keyword id="KW-0808">Transferase</keyword>
<keyword id="KW-0819">tRNA processing</keyword>
<keyword id="KW-0820">tRNA-binding</keyword>
<reference key="1">
    <citation type="journal article" date="2007" name="Proc. Natl. Acad. Sci. U.S.A.">
        <title>The Orientia tsutsugamushi genome reveals massive proliferation of conjugative type IV secretion system and host-cell interaction genes.</title>
        <authorList>
            <person name="Cho N.-H."/>
            <person name="Kim H.-R."/>
            <person name="Lee J.-H."/>
            <person name="Kim S.-Y."/>
            <person name="Kim J."/>
            <person name="Cha S."/>
            <person name="Kim S.-Y."/>
            <person name="Darby A.C."/>
            <person name="Fuxelius H.-H."/>
            <person name="Yin J."/>
            <person name="Kim J.H."/>
            <person name="Kim J."/>
            <person name="Lee S.J."/>
            <person name="Koh Y.-S."/>
            <person name="Jang W.-J."/>
            <person name="Park K.-H."/>
            <person name="Andersson S.G.E."/>
            <person name="Choi M.-S."/>
            <person name="Kim I.-S."/>
        </authorList>
    </citation>
    <scope>NUCLEOTIDE SEQUENCE [LARGE SCALE GENOMIC DNA]</scope>
    <source>
        <strain>Boryong</strain>
    </source>
</reference>
<organism>
    <name type="scientific">Orientia tsutsugamushi (strain Boryong)</name>
    <name type="common">Rickettsia tsutsugamushi</name>
    <dbReference type="NCBI Taxonomy" id="357244"/>
    <lineage>
        <taxon>Bacteria</taxon>
        <taxon>Pseudomonadati</taxon>
        <taxon>Pseudomonadota</taxon>
        <taxon>Alphaproteobacteria</taxon>
        <taxon>Rickettsiales</taxon>
        <taxon>Rickettsiaceae</taxon>
        <taxon>Rickettsieae</taxon>
        <taxon>Orientia</taxon>
    </lineage>
</organism>
<accession>A5CFJ6</accession>
<proteinExistence type="inferred from homology"/>
<evidence type="ECO:0000255" key="1">
    <source>
        <dbReference type="HAMAP-Rule" id="MF_00144"/>
    </source>
</evidence>
<sequence>MLNLKVAKEQATIVVAMSGGVDSSTVAAILKEDGYNVIGITMQLYNHDTAINRKGACCAGQDIYDAKFVANQLQIPHYVLNYKDKFKESVIDNFIESYINGETPLPCVQCNQSVKFHDLLNFAKDLQADALVTGHYVRRIDTANGIELHKAVDSKKDQSYFLFATTKSQLQYLHFPLGNMTKDETRYHANRYGLHIADKPDSQDICFVADGAYHNVVAKLKPNAKKPGKIVHIDGYILGEHQGIINFTIGQRRRIGISFSDPLYVINIDAQQNIVYVGPESKLFKTTFMIHSLNWLGPGNMLVEPLDVEVKVRSTHSAVRAKLYPYSNSMVKVILNEPEKAIAPGQACVIYKGDLVLGGGWIAKEQTQS</sequence>
<dbReference type="EC" id="2.8.1.13" evidence="1"/>
<dbReference type="EMBL" id="AM494475">
    <property type="protein sequence ID" value="CAM81183.1"/>
    <property type="molecule type" value="Genomic_DNA"/>
</dbReference>
<dbReference type="RefSeq" id="WP_011945154.1">
    <property type="nucleotide sequence ID" value="NC_009488.1"/>
</dbReference>
<dbReference type="SMR" id="A5CFJ6"/>
<dbReference type="GeneID" id="89459096"/>
<dbReference type="KEGG" id="ots:OTBS_2088"/>
<dbReference type="eggNOG" id="COG0482">
    <property type="taxonomic scope" value="Bacteria"/>
</dbReference>
<dbReference type="HOGENOM" id="CLU_035188_0_1_5"/>
<dbReference type="Proteomes" id="UP000001565">
    <property type="component" value="Chromosome"/>
</dbReference>
<dbReference type="GO" id="GO:0005737">
    <property type="term" value="C:cytoplasm"/>
    <property type="evidence" value="ECO:0007669"/>
    <property type="project" value="UniProtKB-SubCell"/>
</dbReference>
<dbReference type="GO" id="GO:0005524">
    <property type="term" value="F:ATP binding"/>
    <property type="evidence" value="ECO:0007669"/>
    <property type="project" value="UniProtKB-KW"/>
</dbReference>
<dbReference type="GO" id="GO:0000049">
    <property type="term" value="F:tRNA binding"/>
    <property type="evidence" value="ECO:0007669"/>
    <property type="project" value="UniProtKB-KW"/>
</dbReference>
<dbReference type="GO" id="GO:0103016">
    <property type="term" value="F:tRNA-uridine 2-sulfurtransferase activity"/>
    <property type="evidence" value="ECO:0007669"/>
    <property type="project" value="UniProtKB-EC"/>
</dbReference>
<dbReference type="GO" id="GO:0002143">
    <property type="term" value="P:tRNA wobble position uridine thiolation"/>
    <property type="evidence" value="ECO:0007669"/>
    <property type="project" value="TreeGrafter"/>
</dbReference>
<dbReference type="CDD" id="cd01998">
    <property type="entry name" value="MnmA_TRMU-like"/>
    <property type="match status" value="1"/>
</dbReference>
<dbReference type="FunFam" id="2.30.30.280:FF:000001">
    <property type="entry name" value="tRNA-specific 2-thiouridylase MnmA"/>
    <property type="match status" value="1"/>
</dbReference>
<dbReference type="FunFam" id="3.40.50.620:FF:000115">
    <property type="entry name" value="tRNA-specific 2-thiouridylase MnmA"/>
    <property type="match status" value="1"/>
</dbReference>
<dbReference type="Gene3D" id="2.30.30.280">
    <property type="entry name" value="Adenine nucleotide alpha hydrolases-like domains"/>
    <property type="match status" value="1"/>
</dbReference>
<dbReference type="Gene3D" id="3.40.50.620">
    <property type="entry name" value="HUPs"/>
    <property type="match status" value="1"/>
</dbReference>
<dbReference type="Gene3D" id="2.40.30.10">
    <property type="entry name" value="Translation factors"/>
    <property type="match status" value="1"/>
</dbReference>
<dbReference type="HAMAP" id="MF_00144">
    <property type="entry name" value="tRNA_thiouridyl_MnmA"/>
    <property type="match status" value="1"/>
</dbReference>
<dbReference type="InterPro" id="IPR004506">
    <property type="entry name" value="MnmA-like"/>
</dbReference>
<dbReference type="InterPro" id="IPR046885">
    <property type="entry name" value="MnmA-like_C"/>
</dbReference>
<dbReference type="InterPro" id="IPR046884">
    <property type="entry name" value="MnmA-like_central"/>
</dbReference>
<dbReference type="InterPro" id="IPR023382">
    <property type="entry name" value="MnmA-like_central_sf"/>
</dbReference>
<dbReference type="InterPro" id="IPR014729">
    <property type="entry name" value="Rossmann-like_a/b/a_fold"/>
</dbReference>
<dbReference type="NCBIfam" id="NF001138">
    <property type="entry name" value="PRK00143.1"/>
    <property type="match status" value="1"/>
</dbReference>
<dbReference type="NCBIfam" id="TIGR00420">
    <property type="entry name" value="trmU"/>
    <property type="match status" value="1"/>
</dbReference>
<dbReference type="PANTHER" id="PTHR11933:SF5">
    <property type="entry name" value="MITOCHONDRIAL TRNA-SPECIFIC 2-THIOURIDYLASE 1"/>
    <property type="match status" value="1"/>
</dbReference>
<dbReference type="PANTHER" id="PTHR11933">
    <property type="entry name" value="TRNA 5-METHYLAMINOMETHYL-2-THIOURIDYLATE -METHYLTRANSFERASE"/>
    <property type="match status" value="1"/>
</dbReference>
<dbReference type="Pfam" id="PF03054">
    <property type="entry name" value="tRNA_Me_trans"/>
    <property type="match status" value="1"/>
</dbReference>
<dbReference type="Pfam" id="PF20258">
    <property type="entry name" value="tRNA_Me_trans_C"/>
    <property type="match status" value="1"/>
</dbReference>
<dbReference type="Pfam" id="PF20259">
    <property type="entry name" value="tRNA_Me_trans_M"/>
    <property type="match status" value="1"/>
</dbReference>
<dbReference type="SUPFAM" id="SSF52402">
    <property type="entry name" value="Adenine nucleotide alpha hydrolases-like"/>
    <property type="match status" value="1"/>
</dbReference>
<protein>
    <recommendedName>
        <fullName evidence="1">tRNA-specific 2-thiouridylase MnmA</fullName>
        <ecNumber evidence="1">2.8.1.13</ecNumber>
    </recommendedName>
</protein>
<gene>
    <name evidence="1" type="primary">mnmA</name>
    <name type="ordered locus">OTBS_2088</name>
</gene>
<comment type="function">
    <text evidence="1">Catalyzes the 2-thiolation of uridine at the wobble position (U34) of tRNA, leading to the formation of s(2)U34.</text>
</comment>
<comment type="catalytic activity">
    <reaction evidence="1">
        <text>S-sulfanyl-L-cysteinyl-[protein] + uridine(34) in tRNA + AH2 + ATP = 2-thiouridine(34) in tRNA + L-cysteinyl-[protein] + A + AMP + diphosphate + H(+)</text>
        <dbReference type="Rhea" id="RHEA:47032"/>
        <dbReference type="Rhea" id="RHEA-COMP:10131"/>
        <dbReference type="Rhea" id="RHEA-COMP:11726"/>
        <dbReference type="Rhea" id="RHEA-COMP:11727"/>
        <dbReference type="Rhea" id="RHEA-COMP:11728"/>
        <dbReference type="ChEBI" id="CHEBI:13193"/>
        <dbReference type="ChEBI" id="CHEBI:15378"/>
        <dbReference type="ChEBI" id="CHEBI:17499"/>
        <dbReference type="ChEBI" id="CHEBI:29950"/>
        <dbReference type="ChEBI" id="CHEBI:30616"/>
        <dbReference type="ChEBI" id="CHEBI:33019"/>
        <dbReference type="ChEBI" id="CHEBI:61963"/>
        <dbReference type="ChEBI" id="CHEBI:65315"/>
        <dbReference type="ChEBI" id="CHEBI:87170"/>
        <dbReference type="ChEBI" id="CHEBI:456215"/>
        <dbReference type="EC" id="2.8.1.13"/>
    </reaction>
</comment>
<comment type="subcellular location">
    <subcellularLocation>
        <location evidence="1">Cytoplasm</location>
    </subcellularLocation>
</comment>
<comment type="similarity">
    <text evidence="1">Belongs to the MnmA/TRMU family.</text>
</comment>
<name>MNMA_ORITB</name>